<organism>
    <name type="scientific">Treponema pallidum (strain Nichols)</name>
    <dbReference type="NCBI Taxonomy" id="243276"/>
    <lineage>
        <taxon>Bacteria</taxon>
        <taxon>Pseudomonadati</taxon>
        <taxon>Spirochaetota</taxon>
        <taxon>Spirochaetia</taxon>
        <taxon>Spirochaetales</taxon>
        <taxon>Treponemataceae</taxon>
        <taxon>Treponema</taxon>
    </lineage>
</organism>
<accession>O83998</accession>
<evidence type="ECO:0000255" key="1">
    <source>
        <dbReference type="HAMAP-Rule" id="MF_02004"/>
    </source>
</evidence>
<gene>
    <name evidence="1" type="primary">valS</name>
    <name type="ordered locus">TP_1035</name>
</gene>
<sequence length="956" mass="107363">MTQKLQKIVLPPVYGPADFEARVYACWEQRQAFSPRARGSGTSDSEGCDGHSRQIEGGARTFVIAIPPPNITGVLHMGHCLNTVLQDIVIRYQRMAGACTLWIPGTDHAGIATQHVVERALRKEGIHKREVTREQFVARTQQIKDSHQDTIRMQLRKMGASCDWTCERFTLDAGMSASVREAFVTLYERGLLYRSMYLVNWCPRCGTALSDDEVFHQEKDGALYYVRYPLLPRTEEEGNGVPPPLGTAQVGETIIIATTRPETILADVAVAVHPDDARYQSLIGRKVCVPMVNRIVPIIADSYVAQDFGTGMVKITPAHDPNDWDIGTRHSLEAINMLNPDGSLNDQVPAAYRGLSCAQARIQIVADLQAHGLLSREERIVHSVGVCYRCEAVIEPYLSLQWFVKMKPLASQALAAWKRADVQFHPKKWENTYVRWLEHIRDWCISRQLWWGHRIPVWYCAQCAQQTVSRVDVQRCAHCGSADITQDPDVLDTWFSSWLWPFSTLGWPQETQKLRAFYPTSAVITAYDIIFFWVARMIMAGLEFTQTVPFRDVYLHGLVRDKQGRKMSKSLNNGVDPLHIIRTYGADALRFTLAFMCAQGQDVLIEMDSFKMGSRFANKVWNASRYILGNLEGRRVYAIAHVSLTELDRWIFHTFNETVQQVRTALEAYRFNDAAQAVYEFFWNSFCDWYVEASKCSFQKPDEQEKDRAASVLCTLLEETLRLLHPFLPFVTEEIYRSLSPSVHDTTQAIPSGAHALLMCAPYPVYVPSRVDARACAHIGAVQEIVRAVRTLRAACGIDPQKAVSVRLRPSSPAQDANAAAQVSCVHDPGAVARTYEELICVLAGISSLVYLESDAPKPQVAVATAGTGFELFLVTTEGIDRTMLCARLQKAWQKARQKVQQVERKLADAQFCTHAPEEVVTAERKKLAEARATCHTLAGYLADMNGKPGPLSDSD</sequence>
<protein>
    <recommendedName>
        <fullName evidence="1">Valine--tRNA ligase</fullName>
        <ecNumber evidence="1">6.1.1.9</ecNumber>
    </recommendedName>
    <alternativeName>
        <fullName evidence="1">Valyl-tRNA synthetase</fullName>
        <shortName evidence="1">ValRS</shortName>
    </alternativeName>
</protein>
<dbReference type="EC" id="6.1.1.9" evidence="1"/>
<dbReference type="EMBL" id="AE000520">
    <property type="protein sequence ID" value="AAC26589.1"/>
    <property type="molecule type" value="Genomic_DNA"/>
</dbReference>
<dbReference type="PIR" id="B71250">
    <property type="entry name" value="B71250"/>
</dbReference>
<dbReference type="RefSeq" id="WP_010882479.1">
    <property type="nucleotide sequence ID" value="NC_021490.2"/>
</dbReference>
<dbReference type="SMR" id="O83998"/>
<dbReference type="STRING" id="243276.TP_1035"/>
<dbReference type="EnsemblBacteria" id="AAC26589">
    <property type="protein sequence ID" value="AAC26589"/>
    <property type="gene ID" value="TP_1035"/>
</dbReference>
<dbReference type="KEGG" id="tpa:TP_1035"/>
<dbReference type="KEGG" id="tpw:TPANIC_1035"/>
<dbReference type="eggNOG" id="COG0525">
    <property type="taxonomic scope" value="Bacteria"/>
</dbReference>
<dbReference type="HOGENOM" id="CLU_001493_0_2_12"/>
<dbReference type="OrthoDB" id="9810365at2"/>
<dbReference type="Proteomes" id="UP000000811">
    <property type="component" value="Chromosome"/>
</dbReference>
<dbReference type="GO" id="GO:0005829">
    <property type="term" value="C:cytosol"/>
    <property type="evidence" value="ECO:0007669"/>
    <property type="project" value="TreeGrafter"/>
</dbReference>
<dbReference type="GO" id="GO:0002161">
    <property type="term" value="F:aminoacyl-tRNA deacylase activity"/>
    <property type="evidence" value="ECO:0007669"/>
    <property type="project" value="InterPro"/>
</dbReference>
<dbReference type="GO" id="GO:0005524">
    <property type="term" value="F:ATP binding"/>
    <property type="evidence" value="ECO:0007669"/>
    <property type="project" value="UniProtKB-UniRule"/>
</dbReference>
<dbReference type="GO" id="GO:0004832">
    <property type="term" value="F:valine-tRNA ligase activity"/>
    <property type="evidence" value="ECO:0007669"/>
    <property type="project" value="UniProtKB-UniRule"/>
</dbReference>
<dbReference type="GO" id="GO:0006438">
    <property type="term" value="P:valyl-tRNA aminoacylation"/>
    <property type="evidence" value="ECO:0007669"/>
    <property type="project" value="UniProtKB-UniRule"/>
</dbReference>
<dbReference type="CDD" id="cd07962">
    <property type="entry name" value="Anticodon_Ia_Val"/>
    <property type="match status" value="1"/>
</dbReference>
<dbReference type="CDD" id="cd00817">
    <property type="entry name" value="ValRS_core"/>
    <property type="match status" value="1"/>
</dbReference>
<dbReference type="FunFam" id="3.40.50.620:FF:000098">
    <property type="entry name" value="Valine--tRNA ligase"/>
    <property type="match status" value="1"/>
</dbReference>
<dbReference type="Gene3D" id="3.40.50.620">
    <property type="entry name" value="HUPs"/>
    <property type="match status" value="2"/>
</dbReference>
<dbReference type="Gene3D" id="1.10.730.10">
    <property type="entry name" value="Isoleucyl-tRNA Synthetase, Domain 1"/>
    <property type="match status" value="1"/>
</dbReference>
<dbReference type="Gene3D" id="1.10.287.380">
    <property type="entry name" value="Valyl-tRNA synthetase, C-terminal domain"/>
    <property type="match status" value="1"/>
</dbReference>
<dbReference type="Gene3D" id="3.90.740.10">
    <property type="entry name" value="Valyl/Leucyl/Isoleucyl-tRNA synthetase, editing domain"/>
    <property type="match status" value="1"/>
</dbReference>
<dbReference type="HAMAP" id="MF_02004">
    <property type="entry name" value="Val_tRNA_synth_type1"/>
    <property type="match status" value="1"/>
</dbReference>
<dbReference type="InterPro" id="IPR001412">
    <property type="entry name" value="aa-tRNA-synth_I_CS"/>
</dbReference>
<dbReference type="InterPro" id="IPR002300">
    <property type="entry name" value="aa-tRNA-synth_Ia"/>
</dbReference>
<dbReference type="InterPro" id="IPR033705">
    <property type="entry name" value="Anticodon_Ia_Val"/>
</dbReference>
<dbReference type="InterPro" id="IPR013155">
    <property type="entry name" value="M/V/L/I-tRNA-synth_anticd-bd"/>
</dbReference>
<dbReference type="InterPro" id="IPR014729">
    <property type="entry name" value="Rossmann-like_a/b/a_fold"/>
</dbReference>
<dbReference type="InterPro" id="IPR010978">
    <property type="entry name" value="tRNA-bd_arm"/>
</dbReference>
<dbReference type="InterPro" id="IPR009080">
    <property type="entry name" value="tRNAsynth_Ia_anticodon-bd"/>
</dbReference>
<dbReference type="InterPro" id="IPR037118">
    <property type="entry name" value="Val-tRNA_synth_C_sf"/>
</dbReference>
<dbReference type="InterPro" id="IPR019499">
    <property type="entry name" value="Val-tRNA_synth_tRNA-bd"/>
</dbReference>
<dbReference type="InterPro" id="IPR009008">
    <property type="entry name" value="Val/Leu/Ile-tRNA-synth_edit"/>
</dbReference>
<dbReference type="InterPro" id="IPR002303">
    <property type="entry name" value="Valyl-tRNA_ligase"/>
</dbReference>
<dbReference type="NCBIfam" id="NF004349">
    <property type="entry name" value="PRK05729.1"/>
    <property type="match status" value="1"/>
</dbReference>
<dbReference type="NCBIfam" id="TIGR00422">
    <property type="entry name" value="valS"/>
    <property type="match status" value="1"/>
</dbReference>
<dbReference type="PANTHER" id="PTHR11946:SF93">
    <property type="entry name" value="VALINE--TRNA LIGASE, CHLOROPLASTIC_MITOCHONDRIAL 2"/>
    <property type="match status" value="1"/>
</dbReference>
<dbReference type="PANTHER" id="PTHR11946">
    <property type="entry name" value="VALYL-TRNA SYNTHETASES"/>
    <property type="match status" value="1"/>
</dbReference>
<dbReference type="Pfam" id="PF08264">
    <property type="entry name" value="Anticodon_1"/>
    <property type="match status" value="1"/>
</dbReference>
<dbReference type="Pfam" id="PF00133">
    <property type="entry name" value="tRNA-synt_1"/>
    <property type="match status" value="1"/>
</dbReference>
<dbReference type="Pfam" id="PF10458">
    <property type="entry name" value="Val_tRNA-synt_C"/>
    <property type="match status" value="1"/>
</dbReference>
<dbReference type="PRINTS" id="PR00986">
    <property type="entry name" value="TRNASYNTHVAL"/>
</dbReference>
<dbReference type="SUPFAM" id="SSF47323">
    <property type="entry name" value="Anticodon-binding domain of a subclass of class I aminoacyl-tRNA synthetases"/>
    <property type="match status" value="1"/>
</dbReference>
<dbReference type="SUPFAM" id="SSF52374">
    <property type="entry name" value="Nucleotidylyl transferase"/>
    <property type="match status" value="1"/>
</dbReference>
<dbReference type="SUPFAM" id="SSF46589">
    <property type="entry name" value="tRNA-binding arm"/>
    <property type="match status" value="1"/>
</dbReference>
<dbReference type="SUPFAM" id="SSF50677">
    <property type="entry name" value="ValRS/IleRS/LeuRS editing domain"/>
    <property type="match status" value="1"/>
</dbReference>
<dbReference type="PROSITE" id="PS00178">
    <property type="entry name" value="AA_TRNA_LIGASE_I"/>
    <property type="match status" value="1"/>
</dbReference>
<name>SYV_TREPA</name>
<comment type="function">
    <text evidence="1">Catalyzes the attachment of valine to tRNA(Val). As ValRS can inadvertently accommodate and process structurally similar amino acids such as threonine, to avoid such errors, it has a 'posttransfer' editing activity that hydrolyzes mischarged Thr-tRNA(Val) in a tRNA-dependent manner.</text>
</comment>
<comment type="catalytic activity">
    <reaction evidence="1">
        <text>tRNA(Val) + L-valine + ATP = L-valyl-tRNA(Val) + AMP + diphosphate</text>
        <dbReference type="Rhea" id="RHEA:10704"/>
        <dbReference type="Rhea" id="RHEA-COMP:9672"/>
        <dbReference type="Rhea" id="RHEA-COMP:9708"/>
        <dbReference type="ChEBI" id="CHEBI:30616"/>
        <dbReference type="ChEBI" id="CHEBI:33019"/>
        <dbReference type="ChEBI" id="CHEBI:57762"/>
        <dbReference type="ChEBI" id="CHEBI:78442"/>
        <dbReference type="ChEBI" id="CHEBI:78537"/>
        <dbReference type="ChEBI" id="CHEBI:456215"/>
        <dbReference type="EC" id="6.1.1.9"/>
    </reaction>
</comment>
<comment type="subunit">
    <text evidence="1">Monomer.</text>
</comment>
<comment type="subcellular location">
    <subcellularLocation>
        <location evidence="1">Cytoplasm</location>
    </subcellularLocation>
</comment>
<comment type="domain">
    <text evidence="1">ValRS has two distinct active sites: one for aminoacylation and one for editing. The misactivated threonine is translocated from the active site to the editing site.</text>
</comment>
<comment type="domain">
    <text evidence="1">The C-terminal coiled-coil domain is crucial for aminoacylation activity.</text>
</comment>
<comment type="similarity">
    <text evidence="1">Belongs to the class-I aminoacyl-tRNA synthetase family. ValS type 1 subfamily.</text>
</comment>
<feature type="chain" id="PRO_0000106241" description="Valine--tRNA ligase">
    <location>
        <begin position="1"/>
        <end position="956"/>
    </location>
</feature>
<feature type="coiled-coil region" evidence="1">
    <location>
        <begin position="885"/>
        <end position="911"/>
    </location>
</feature>
<feature type="short sequence motif" description="'HIGH' region">
    <location>
        <begin position="69"/>
        <end position="79"/>
    </location>
</feature>
<feature type="short sequence motif" description="'KMSKS' region">
    <location>
        <begin position="566"/>
        <end position="570"/>
    </location>
</feature>
<feature type="binding site" evidence="1">
    <location>
        <position position="569"/>
    </location>
    <ligand>
        <name>ATP</name>
        <dbReference type="ChEBI" id="CHEBI:30616"/>
    </ligand>
</feature>
<keyword id="KW-0030">Aminoacyl-tRNA synthetase</keyword>
<keyword id="KW-0067">ATP-binding</keyword>
<keyword id="KW-0175">Coiled coil</keyword>
<keyword id="KW-0963">Cytoplasm</keyword>
<keyword id="KW-0436">Ligase</keyword>
<keyword id="KW-0547">Nucleotide-binding</keyword>
<keyword id="KW-0648">Protein biosynthesis</keyword>
<keyword id="KW-1185">Reference proteome</keyword>
<proteinExistence type="inferred from homology"/>
<reference key="1">
    <citation type="journal article" date="1998" name="Science">
        <title>Complete genome sequence of Treponema pallidum, the syphilis spirochete.</title>
        <authorList>
            <person name="Fraser C.M."/>
            <person name="Norris S.J."/>
            <person name="Weinstock G.M."/>
            <person name="White O."/>
            <person name="Sutton G.G."/>
            <person name="Dodson R.J."/>
            <person name="Gwinn M.L."/>
            <person name="Hickey E.K."/>
            <person name="Clayton R.A."/>
            <person name="Ketchum K.A."/>
            <person name="Sodergren E."/>
            <person name="Hardham J.M."/>
            <person name="McLeod M.P."/>
            <person name="Salzberg S.L."/>
            <person name="Peterson J.D."/>
            <person name="Khalak H.G."/>
            <person name="Richardson D.L."/>
            <person name="Howell J.K."/>
            <person name="Chidambaram M."/>
            <person name="Utterback T.R."/>
            <person name="McDonald L.A."/>
            <person name="Artiach P."/>
            <person name="Bowman C."/>
            <person name="Cotton M.D."/>
            <person name="Fujii C."/>
            <person name="Garland S.A."/>
            <person name="Hatch B."/>
            <person name="Horst K."/>
            <person name="Roberts K.M."/>
            <person name="Sandusky M."/>
            <person name="Weidman J.F."/>
            <person name="Smith H.O."/>
            <person name="Venter J.C."/>
        </authorList>
    </citation>
    <scope>NUCLEOTIDE SEQUENCE [LARGE SCALE GENOMIC DNA]</scope>
    <source>
        <strain>Nichols</strain>
    </source>
</reference>